<gene>
    <name type="primary">Dd</name>
    <name type="synonym">l(1)G0269</name>
    <name type="ORF">CG1696</name>
</gene>
<feature type="chain" id="PRO_0000297976" description="CTD nuclear envelope phosphatase 1 homolog">
    <location>
        <begin position="1"/>
        <end position="243"/>
    </location>
</feature>
<feature type="transmembrane region" description="Helical" evidence="2">
    <location>
        <begin position="11"/>
        <end position="27"/>
    </location>
</feature>
<feature type="domain" description="FCP1 homology" evidence="3">
    <location>
        <begin position="56"/>
        <end position="223"/>
    </location>
</feature>
<organism>
    <name type="scientific">Drosophila melanogaster</name>
    <name type="common">Fruit fly</name>
    <dbReference type="NCBI Taxonomy" id="7227"/>
    <lineage>
        <taxon>Eukaryota</taxon>
        <taxon>Metazoa</taxon>
        <taxon>Ecdysozoa</taxon>
        <taxon>Arthropoda</taxon>
        <taxon>Hexapoda</taxon>
        <taxon>Insecta</taxon>
        <taxon>Pterygota</taxon>
        <taxon>Neoptera</taxon>
        <taxon>Endopterygota</taxon>
        <taxon>Diptera</taxon>
        <taxon>Brachycera</taxon>
        <taxon>Muscomorpha</taxon>
        <taxon>Ephydroidea</taxon>
        <taxon>Drosophilidae</taxon>
        <taxon>Drosophila</taxon>
        <taxon>Sophophora</taxon>
    </lineage>
</organism>
<reference key="1">
    <citation type="journal article" date="2000" name="Science">
        <title>The genome sequence of Drosophila melanogaster.</title>
        <authorList>
            <person name="Adams M.D."/>
            <person name="Celniker S.E."/>
            <person name="Holt R.A."/>
            <person name="Evans C.A."/>
            <person name="Gocayne J.D."/>
            <person name="Amanatides P.G."/>
            <person name="Scherer S.E."/>
            <person name="Li P.W."/>
            <person name="Hoskins R.A."/>
            <person name="Galle R.F."/>
            <person name="George R.A."/>
            <person name="Lewis S.E."/>
            <person name="Richards S."/>
            <person name="Ashburner M."/>
            <person name="Henderson S.N."/>
            <person name="Sutton G.G."/>
            <person name="Wortman J.R."/>
            <person name="Yandell M.D."/>
            <person name="Zhang Q."/>
            <person name="Chen L.X."/>
            <person name="Brandon R.C."/>
            <person name="Rogers Y.-H.C."/>
            <person name="Blazej R.G."/>
            <person name="Champe M."/>
            <person name="Pfeiffer B.D."/>
            <person name="Wan K.H."/>
            <person name="Doyle C."/>
            <person name="Baxter E.G."/>
            <person name="Helt G."/>
            <person name="Nelson C.R."/>
            <person name="Miklos G.L.G."/>
            <person name="Abril J.F."/>
            <person name="Agbayani A."/>
            <person name="An H.-J."/>
            <person name="Andrews-Pfannkoch C."/>
            <person name="Baldwin D."/>
            <person name="Ballew R.M."/>
            <person name="Basu A."/>
            <person name="Baxendale J."/>
            <person name="Bayraktaroglu L."/>
            <person name="Beasley E.M."/>
            <person name="Beeson K.Y."/>
            <person name="Benos P.V."/>
            <person name="Berman B.P."/>
            <person name="Bhandari D."/>
            <person name="Bolshakov S."/>
            <person name="Borkova D."/>
            <person name="Botchan M.R."/>
            <person name="Bouck J."/>
            <person name="Brokstein P."/>
            <person name="Brottier P."/>
            <person name="Burtis K.C."/>
            <person name="Busam D.A."/>
            <person name="Butler H."/>
            <person name="Cadieu E."/>
            <person name="Center A."/>
            <person name="Chandra I."/>
            <person name="Cherry J.M."/>
            <person name="Cawley S."/>
            <person name="Dahlke C."/>
            <person name="Davenport L.B."/>
            <person name="Davies P."/>
            <person name="de Pablos B."/>
            <person name="Delcher A."/>
            <person name="Deng Z."/>
            <person name="Mays A.D."/>
            <person name="Dew I."/>
            <person name="Dietz S.M."/>
            <person name="Dodson K."/>
            <person name="Doup L.E."/>
            <person name="Downes M."/>
            <person name="Dugan-Rocha S."/>
            <person name="Dunkov B.C."/>
            <person name="Dunn P."/>
            <person name="Durbin K.J."/>
            <person name="Evangelista C.C."/>
            <person name="Ferraz C."/>
            <person name="Ferriera S."/>
            <person name="Fleischmann W."/>
            <person name="Fosler C."/>
            <person name="Gabrielian A.E."/>
            <person name="Garg N.S."/>
            <person name="Gelbart W.M."/>
            <person name="Glasser K."/>
            <person name="Glodek A."/>
            <person name="Gong F."/>
            <person name="Gorrell J.H."/>
            <person name="Gu Z."/>
            <person name="Guan P."/>
            <person name="Harris M."/>
            <person name="Harris N.L."/>
            <person name="Harvey D.A."/>
            <person name="Heiman T.J."/>
            <person name="Hernandez J.R."/>
            <person name="Houck J."/>
            <person name="Hostin D."/>
            <person name="Houston K.A."/>
            <person name="Howland T.J."/>
            <person name="Wei M.-H."/>
            <person name="Ibegwam C."/>
            <person name="Jalali M."/>
            <person name="Kalush F."/>
            <person name="Karpen G.H."/>
            <person name="Ke Z."/>
            <person name="Kennison J.A."/>
            <person name="Ketchum K.A."/>
            <person name="Kimmel B.E."/>
            <person name="Kodira C.D."/>
            <person name="Kraft C.L."/>
            <person name="Kravitz S."/>
            <person name="Kulp D."/>
            <person name="Lai Z."/>
            <person name="Lasko P."/>
            <person name="Lei Y."/>
            <person name="Levitsky A.A."/>
            <person name="Li J.H."/>
            <person name="Li Z."/>
            <person name="Liang Y."/>
            <person name="Lin X."/>
            <person name="Liu X."/>
            <person name="Mattei B."/>
            <person name="McIntosh T.C."/>
            <person name="McLeod M.P."/>
            <person name="McPherson D."/>
            <person name="Merkulov G."/>
            <person name="Milshina N.V."/>
            <person name="Mobarry C."/>
            <person name="Morris J."/>
            <person name="Moshrefi A."/>
            <person name="Mount S.M."/>
            <person name="Moy M."/>
            <person name="Murphy B."/>
            <person name="Murphy L."/>
            <person name="Muzny D.M."/>
            <person name="Nelson D.L."/>
            <person name="Nelson D.R."/>
            <person name="Nelson K.A."/>
            <person name="Nixon K."/>
            <person name="Nusskern D.R."/>
            <person name="Pacleb J.M."/>
            <person name="Palazzolo M."/>
            <person name="Pittman G.S."/>
            <person name="Pan S."/>
            <person name="Pollard J."/>
            <person name="Puri V."/>
            <person name="Reese M.G."/>
            <person name="Reinert K."/>
            <person name="Remington K."/>
            <person name="Saunders R.D.C."/>
            <person name="Scheeler F."/>
            <person name="Shen H."/>
            <person name="Shue B.C."/>
            <person name="Siden-Kiamos I."/>
            <person name="Simpson M."/>
            <person name="Skupski M.P."/>
            <person name="Smith T.J."/>
            <person name="Spier E."/>
            <person name="Spradling A.C."/>
            <person name="Stapleton M."/>
            <person name="Strong R."/>
            <person name="Sun E."/>
            <person name="Svirskas R."/>
            <person name="Tector C."/>
            <person name="Turner R."/>
            <person name="Venter E."/>
            <person name="Wang A.H."/>
            <person name="Wang X."/>
            <person name="Wang Z.-Y."/>
            <person name="Wassarman D.A."/>
            <person name="Weinstock G.M."/>
            <person name="Weissenbach J."/>
            <person name="Williams S.M."/>
            <person name="Woodage T."/>
            <person name="Worley K.C."/>
            <person name="Wu D."/>
            <person name="Yang S."/>
            <person name="Yao Q.A."/>
            <person name="Ye J."/>
            <person name="Yeh R.-F."/>
            <person name="Zaveri J.S."/>
            <person name="Zhan M."/>
            <person name="Zhang G."/>
            <person name="Zhao Q."/>
            <person name="Zheng L."/>
            <person name="Zheng X.H."/>
            <person name="Zhong F.N."/>
            <person name="Zhong W."/>
            <person name="Zhou X."/>
            <person name="Zhu S.C."/>
            <person name="Zhu X."/>
            <person name="Smith H.O."/>
            <person name="Gibbs R.A."/>
            <person name="Myers E.W."/>
            <person name="Rubin G.M."/>
            <person name="Venter J.C."/>
        </authorList>
    </citation>
    <scope>NUCLEOTIDE SEQUENCE [LARGE SCALE GENOMIC DNA]</scope>
    <source>
        <strain>Berkeley</strain>
    </source>
</reference>
<reference key="2">
    <citation type="journal article" date="2002" name="Genome Biol.">
        <title>Annotation of the Drosophila melanogaster euchromatic genome: a systematic review.</title>
        <authorList>
            <person name="Misra S."/>
            <person name="Crosby M.A."/>
            <person name="Mungall C.J."/>
            <person name="Matthews B.B."/>
            <person name="Campbell K.S."/>
            <person name="Hradecky P."/>
            <person name="Huang Y."/>
            <person name="Kaminker J.S."/>
            <person name="Millburn G.H."/>
            <person name="Prochnik S.E."/>
            <person name="Smith C.D."/>
            <person name="Tupy J.L."/>
            <person name="Whitfield E.J."/>
            <person name="Bayraktaroglu L."/>
            <person name="Berman B.P."/>
            <person name="Bettencourt B.R."/>
            <person name="Celniker S.E."/>
            <person name="de Grey A.D.N.J."/>
            <person name="Drysdale R.A."/>
            <person name="Harris N.L."/>
            <person name="Richter J."/>
            <person name="Russo S."/>
            <person name="Schroeder A.J."/>
            <person name="Shu S.Q."/>
            <person name="Stapleton M."/>
            <person name="Yamada C."/>
            <person name="Ashburner M."/>
            <person name="Gelbart W.M."/>
            <person name="Rubin G.M."/>
            <person name="Lewis S.E."/>
        </authorList>
    </citation>
    <scope>GENOME REANNOTATION</scope>
    <source>
        <strain>Berkeley</strain>
    </source>
</reference>
<reference key="3">
    <citation type="journal article" date="2002" name="Genome Biol.">
        <title>A Drosophila full-length cDNA resource.</title>
        <authorList>
            <person name="Stapleton M."/>
            <person name="Carlson J.W."/>
            <person name="Brokstein P."/>
            <person name="Yu C."/>
            <person name="Champe M."/>
            <person name="George R.A."/>
            <person name="Guarin H."/>
            <person name="Kronmiller B."/>
            <person name="Pacleb J.M."/>
            <person name="Park S."/>
            <person name="Wan K.H."/>
            <person name="Rubin G.M."/>
            <person name="Celniker S.E."/>
        </authorList>
    </citation>
    <scope>NUCLEOTIDE SEQUENCE [LARGE SCALE MRNA]</scope>
    <source>
        <strain>Berkeley</strain>
        <tissue>Embryo</tissue>
    </source>
</reference>
<evidence type="ECO:0000250" key="1"/>
<evidence type="ECO:0000255" key="2"/>
<evidence type="ECO:0000255" key="3">
    <source>
        <dbReference type="PROSITE-ProRule" id="PRU00336"/>
    </source>
</evidence>
<evidence type="ECO:0000305" key="4"/>
<comment type="function">
    <text evidence="1">Serine/threonine protein phosphatase that may dephosphorylate and activate lipin-like phosphatases. Lipins are phosphatidate phosphatases that catalyze the conversion of phosphatidic acid to diacylglycerol and control the metabolism of fatty acids at different levels. May indirectly modulate the lipid composition of nuclear and/or endoplasmic reticulum membranes and be required for proper nuclear membrane morphology and/or dynamics. May also indirectly regulate the production of lipid droplets and triacylglycerol (By similarity).</text>
</comment>
<comment type="catalytic activity">
    <reaction>
        <text>O-phospho-L-seryl-[protein] + H2O = L-seryl-[protein] + phosphate</text>
        <dbReference type="Rhea" id="RHEA:20629"/>
        <dbReference type="Rhea" id="RHEA-COMP:9863"/>
        <dbReference type="Rhea" id="RHEA-COMP:11604"/>
        <dbReference type="ChEBI" id="CHEBI:15377"/>
        <dbReference type="ChEBI" id="CHEBI:29999"/>
        <dbReference type="ChEBI" id="CHEBI:43474"/>
        <dbReference type="ChEBI" id="CHEBI:83421"/>
        <dbReference type="EC" id="3.1.3.16"/>
    </reaction>
</comment>
<comment type="catalytic activity">
    <reaction>
        <text>O-phospho-L-threonyl-[protein] + H2O = L-threonyl-[protein] + phosphate</text>
        <dbReference type="Rhea" id="RHEA:47004"/>
        <dbReference type="Rhea" id="RHEA-COMP:11060"/>
        <dbReference type="Rhea" id="RHEA-COMP:11605"/>
        <dbReference type="ChEBI" id="CHEBI:15377"/>
        <dbReference type="ChEBI" id="CHEBI:30013"/>
        <dbReference type="ChEBI" id="CHEBI:43474"/>
        <dbReference type="ChEBI" id="CHEBI:61977"/>
        <dbReference type="EC" id="3.1.3.16"/>
    </reaction>
</comment>
<comment type="subcellular location">
    <subcellularLocation>
        <location evidence="4">Membrane</location>
        <topology evidence="4">Single-pass membrane protein</topology>
    </subcellularLocation>
</comment>
<comment type="similarity">
    <text evidence="4">Belongs to the dullard family.</text>
</comment>
<comment type="sequence caution" evidence="4">
    <conflict type="erroneous initiation">
        <sequence resource="EMBL-CDS" id="AAM48350"/>
    </conflict>
</comment>
<keyword id="KW-0378">Hydrolase</keyword>
<keyword id="KW-0472">Membrane</keyword>
<keyword id="KW-0904">Protein phosphatase</keyword>
<keyword id="KW-1185">Reference proteome</keyword>
<keyword id="KW-0812">Transmembrane</keyword>
<keyword id="KW-1133">Transmembrane helix</keyword>
<protein>
    <recommendedName>
        <fullName>CTD nuclear envelope phosphatase 1 homolog</fullName>
        <ecNumber>3.1.3.16</ecNumber>
    </recommendedName>
    <alternativeName>
        <fullName>Serine/threonine-protein phosphatase dullard homolog</fullName>
    </alternativeName>
</protein>
<sequence length="243" mass="28486">MISLLQMKFRALLLLLSKVWTCICFMFNRQVRAFIQYQPVKYELFPLSPVSRHRLSLVQRKTLVLDLDETLIHSHHNAMPRNTVKPGTPHDFTVKVTIDRNPVRFFVHKRPHVDYFLDVVSQWYDLVVFTASMEIYGAAVADKLDNGRNILRRRYYRQHCTPDYGSYTKDLSAICSDLNRIFIIDNSPGAYRCFPNNAIPIKSWFSDPMDTALLSLLPMLDALRFTNDVRSVLSRNLHLHRLW</sequence>
<name>CNEP1_DROME</name>
<accession>Q9VRG7</accession>
<accession>Q8MT79</accession>
<proteinExistence type="evidence at transcript level"/>
<dbReference type="EC" id="3.1.3.16"/>
<dbReference type="EMBL" id="AE014298">
    <property type="protein sequence ID" value="AAF50833.1"/>
    <property type="molecule type" value="Genomic_DNA"/>
</dbReference>
<dbReference type="EMBL" id="AY094776">
    <property type="protein sequence ID" value="AAM11129.1"/>
    <property type="molecule type" value="mRNA"/>
</dbReference>
<dbReference type="EMBL" id="AY118321">
    <property type="protein sequence ID" value="AAM48350.1"/>
    <property type="status" value="ALT_INIT"/>
    <property type="molecule type" value="mRNA"/>
</dbReference>
<dbReference type="RefSeq" id="NP_608449.1">
    <property type="nucleotide sequence ID" value="NM_134605.3"/>
</dbReference>
<dbReference type="SMR" id="Q9VRG7"/>
<dbReference type="BioGRID" id="59385">
    <property type="interactions" value="14"/>
</dbReference>
<dbReference type="FunCoup" id="Q9VRG7">
    <property type="interactions" value="2314"/>
</dbReference>
<dbReference type="STRING" id="7227.FBpp0076921"/>
<dbReference type="PaxDb" id="7227-FBpp0076921"/>
<dbReference type="DNASU" id="33107"/>
<dbReference type="EnsemblMetazoa" id="FBtr0077226">
    <property type="protein sequence ID" value="FBpp0076921"/>
    <property type="gene ID" value="FBgn0029067"/>
</dbReference>
<dbReference type="GeneID" id="33107"/>
<dbReference type="KEGG" id="dme:Dmel_CG1696"/>
<dbReference type="AGR" id="FB:FBgn0029067"/>
<dbReference type="CTD" id="33107"/>
<dbReference type="FlyBase" id="FBgn0029067">
    <property type="gene designation" value="Dd"/>
</dbReference>
<dbReference type="VEuPathDB" id="VectorBase:FBgn0029067"/>
<dbReference type="eggNOG" id="KOG1605">
    <property type="taxonomic scope" value="Eukaryota"/>
</dbReference>
<dbReference type="GeneTree" id="ENSGT01040000240503"/>
<dbReference type="InParanoid" id="Q9VRG7"/>
<dbReference type="OMA" id="RIWGFFM"/>
<dbReference type="OrthoDB" id="277011at2759"/>
<dbReference type="PhylomeDB" id="Q9VRG7"/>
<dbReference type="Reactome" id="R-DME-4419969">
    <property type="pathway name" value="Depolymerization of the Nuclear Lamina"/>
</dbReference>
<dbReference type="BioGRID-ORCS" id="33107">
    <property type="hits" value="0 hits in 3 CRISPR screens"/>
</dbReference>
<dbReference type="GenomeRNAi" id="33107"/>
<dbReference type="PRO" id="PR:Q9VRG7"/>
<dbReference type="Proteomes" id="UP000000803">
    <property type="component" value="Chromosome X"/>
</dbReference>
<dbReference type="Bgee" id="FBgn0029067">
    <property type="expression patterns" value="Expressed in spermatogonium in testis and 264 other cell types or tissues"/>
</dbReference>
<dbReference type="ExpressionAtlas" id="Q9VRG7">
    <property type="expression patterns" value="baseline and differential"/>
</dbReference>
<dbReference type="GO" id="GO:0005737">
    <property type="term" value="C:cytoplasm"/>
    <property type="evidence" value="ECO:0000250"/>
    <property type="project" value="UniProtKB"/>
</dbReference>
<dbReference type="GO" id="GO:0005789">
    <property type="term" value="C:endoplasmic reticulum membrane"/>
    <property type="evidence" value="ECO:0000314"/>
    <property type="project" value="FlyBase"/>
</dbReference>
<dbReference type="GO" id="GO:0071595">
    <property type="term" value="C:Nem1-Spo7 phosphatase complex"/>
    <property type="evidence" value="ECO:0000250"/>
    <property type="project" value="UniProtKB"/>
</dbReference>
<dbReference type="GO" id="GO:0005635">
    <property type="term" value="C:nuclear envelope"/>
    <property type="evidence" value="ECO:0000250"/>
    <property type="project" value="UniProtKB"/>
</dbReference>
<dbReference type="GO" id="GO:0031965">
    <property type="term" value="C:nuclear membrane"/>
    <property type="evidence" value="ECO:0000250"/>
    <property type="project" value="UniProtKB"/>
</dbReference>
<dbReference type="GO" id="GO:0008287">
    <property type="term" value="C:protein serine/threonine phosphatase complex"/>
    <property type="evidence" value="ECO:0000304"/>
    <property type="project" value="FlyBase"/>
</dbReference>
<dbReference type="GO" id="GO:0019211">
    <property type="term" value="F:phosphatase activator activity"/>
    <property type="evidence" value="ECO:0000316"/>
    <property type="project" value="FlyBase"/>
</dbReference>
<dbReference type="GO" id="GO:0004721">
    <property type="term" value="F:phosphoprotein phosphatase activity"/>
    <property type="evidence" value="ECO:0000250"/>
    <property type="project" value="UniProtKB"/>
</dbReference>
<dbReference type="GO" id="GO:0004722">
    <property type="term" value="F:protein serine/threonine phosphatase activity"/>
    <property type="evidence" value="ECO:0000315"/>
    <property type="project" value="FlyBase"/>
</dbReference>
<dbReference type="GO" id="GO:0007474">
    <property type="term" value="P:imaginal disc-derived wing vein specification"/>
    <property type="evidence" value="ECO:0000315"/>
    <property type="project" value="FlyBase"/>
</dbReference>
<dbReference type="GO" id="GO:0030514">
    <property type="term" value="P:negative regulation of BMP signaling pathway"/>
    <property type="evidence" value="ECO:0000315"/>
    <property type="project" value="FlyBase"/>
</dbReference>
<dbReference type="GO" id="GO:0006998">
    <property type="term" value="P:nuclear envelope organization"/>
    <property type="evidence" value="ECO:0000250"/>
    <property type="project" value="UniProtKB"/>
</dbReference>
<dbReference type="GO" id="GO:0101025">
    <property type="term" value="P:nuclear membrane biogenesis"/>
    <property type="evidence" value="ECO:0000270"/>
    <property type="project" value="FlyBase"/>
</dbReference>
<dbReference type="GO" id="GO:0010867">
    <property type="term" value="P:positive regulation of triglyceride biosynthetic process"/>
    <property type="evidence" value="ECO:0000250"/>
    <property type="project" value="UniProtKB"/>
</dbReference>
<dbReference type="CDD" id="cd07521">
    <property type="entry name" value="HAD_FCP1-like"/>
    <property type="match status" value="1"/>
</dbReference>
<dbReference type="FunFam" id="3.40.50.1000:FF:000044">
    <property type="entry name" value="CTD nuclear envelope phosphatase 1"/>
    <property type="match status" value="1"/>
</dbReference>
<dbReference type="Gene3D" id="3.40.50.1000">
    <property type="entry name" value="HAD superfamily/HAD-like"/>
    <property type="match status" value="1"/>
</dbReference>
<dbReference type="InterPro" id="IPR011948">
    <property type="entry name" value="Dullard_phosphatase"/>
</dbReference>
<dbReference type="InterPro" id="IPR004274">
    <property type="entry name" value="FCP1_dom"/>
</dbReference>
<dbReference type="InterPro" id="IPR036412">
    <property type="entry name" value="HAD-like_sf"/>
</dbReference>
<dbReference type="InterPro" id="IPR023214">
    <property type="entry name" value="HAD_sf"/>
</dbReference>
<dbReference type="InterPro" id="IPR050365">
    <property type="entry name" value="TIM50"/>
</dbReference>
<dbReference type="NCBIfam" id="TIGR02251">
    <property type="entry name" value="HIF-SF_euk"/>
    <property type="match status" value="1"/>
</dbReference>
<dbReference type="PANTHER" id="PTHR12210">
    <property type="entry name" value="DULLARD PROTEIN PHOSPHATASE"/>
    <property type="match status" value="1"/>
</dbReference>
<dbReference type="Pfam" id="PF03031">
    <property type="entry name" value="NIF"/>
    <property type="match status" value="1"/>
</dbReference>
<dbReference type="SMART" id="SM00577">
    <property type="entry name" value="CPDc"/>
    <property type="match status" value="1"/>
</dbReference>
<dbReference type="SUPFAM" id="SSF56784">
    <property type="entry name" value="HAD-like"/>
    <property type="match status" value="1"/>
</dbReference>
<dbReference type="PROSITE" id="PS50969">
    <property type="entry name" value="FCP1"/>
    <property type="match status" value="1"/>
</dbReference>